<dbReference type="EMBL" id="U85982">
    <property type="protein sequence ID" value="AAC47465.1"/>
    <property type="molecule type" value="mRNA"/>
</dbReference>
<dbReference type="EMBL" id="U97114">
    <property type="protein sequence ID" value="AAD04200.1"/>
    <property type="molecule type" value="Genomic_DNA"/>
</dbReference>
<dbReference type="EMBL" id="U97114">
    <property type="protein sequence ID" value="AAD04201.1"/>
    <property type="molecule type" value="Genomic_DNA"/>
</dbReference>
<dbReference type="EMBL" id="AE014298">
    <property type="protein sequence ID" value="AAF45899.1"/>
    <property type="molecule type" value="Genomic_DNA"/>
</dbReference>
<dbReference type="EMBL" id="AE014298">
    <property type="protein sequence ID" value="AAF45900.2"/>
    <property type="molecule type" value="Genomic_DNA"/>
</dbReference>
<dbReference type="EMBL" id="AE014298">
    <property type="protein sequence ID" value="AAN09110.1"/>
    <property type="molecule type" value="Genomic_DNA"/>
</dbReference>
<dbReference type="EMBL" id="AL031130">
    <property type="protein sequence ID" value="CAA20014.1"/>
    <property type="molecule type" value="Genomic_DNA"/>
</dbReference>
<dbReference type="EMBL" id="AL031130">
    <property type="protein sequence ID" value="CAA20015.1"/>
    <property type="molecule type" value="Genomic_DNA"/>
</dbReference>
<dbReference type="EMBL" id="BT031266">
    <property type="protein sequence ID" value="ABY20507.1"/>
    <property type="molecule type" value="mRNA"/>
</dbReference>
<dbReference type="EMBL" id="BT031310">
    <property type="protein sequence ID" value="ABY21723.1"/>
    <property type="status" value="ALT_INIT"/>
    <property type="molecule type" value="mRNA"/>
</dbReference>
<dbReference type="EMBL" id="AY058467">
    <property type="protein sequence ID" value="AAL13696.1"/>
    <property type="status" value="ALT_INIT"/>
    <property type="molecule type" value="mRNA"/>
</dbReference>
<dbReference type="PIR" id="T13673">
    <property type="entry name" value="T13673"/>
</dbReference>
<dbReference type="PIR" id="T13674">
    <property type="entry name" value="T13674"/>
</dbReference>
<dbReference type="RefSeq" id="NP_477147.2">
    <molecule id="P91679-1"/>
    <property type="nucleotide sequence ID" value="NM_057799.4"/>
</dbReference>
<dbReference type="RefSeq" id="NP_477148.2">
    <molecule id="P91679-2"/>
    <property type="nucleotide sequence ID" value="NM_057800.4"/>
</dbReference>
<dbReference type="RefSeq" id="NP_726894.1">
    <molecule id="P91679-3"/>
    <property type="nucleotide sequence ID" value="NM_166993.2"/>
</dbReference>
<dbReference type="SMR" id="P91679"/>
<dbReference type="BioGRID" id="57859">
    <property type="interactions" value="9"/>
</dbReference>
<dbReference type="FunCoup" id="P91679">
    <property type="interactions" value="20"/>
</dbReference>
<dbReference type="IntAct" id="P91679">
    <property type="interactions" value="5"/>
</dbReference>
<dbReference type="STRING" id="7227.FBpp0309178"/>
<dbReference type="TCDB" id="2.A.17.4.2">
    <property type="family name" value="the proton-dependent oligopeptide transporter (pot/ptr) family"/>
</dbReference>
<dbReference type="PaxDb" id="7227-FBpp0070601"/>
<dbReference type="DNASU" id="31340"/>
<dbReference type="EnsemblMetazoa" id="FBtr0340204">
    <molecule id="P91679-1"/>
    <property type="protein sequence ID" value="FBpp0309179"/>
    <property type="gene ID" value="FBgn0265575"/>
</dbReference>
<dbReference type="EnsemblMetazoa" id="FBtr0340205">
    <molecule id="P91679-2"/>
    <property type="protein sequence ID" value="FBpp0309180"/>
    <property type="gene ID" value="FBgn0265575"/>
</dbReference>
<dbReference type="EnsemblMetazoa" id="FBtr0340206">
    <molecule id="P91679-3"/>
    <property type="protein sequence ID" value="FBpp0309181"/>
    <property type="gene ID" value="FBgn0265575"/>
</dbReference>
<dbReference type="GeneID" id="31340"/>
<dbReference type="KEGG" id="dme:Dmel_CG44402"/>
<dbReference type="AGR" id="FB:FBgn0265575"/>
<dbReference type="CTD" id="31340"/>
<dbReference type="FlyBase" id="FBgn0265575">
    <property type="gene designation" value="yin"/>
</dbReference>
<dbReference type="VEuPathDB" id="VectorBase:FBgn0265575"/>
<dbReference type="eggNOG" id="KOG1237">
    <property type="taxonomic scope" value="Eukaryota"/>
</dbReference>
<dbReference type="GeneTree" id="ENSGT00940000165486"/>
<dbReference type="HOGENOM" id="CLU_004790_3_0_1"/>
<dbReference type="InParanoid" id="P91679"/>
<dbReference type="OrthoDB" id="8904098at2759"/>
<dbReference type="PhylomeDB" id="P91679"/>
<dbReference type="Reactome" id="R-DME-427975">
    <property type="pathway name" value="Proton/oligopeptide cotransporters"/>
</dbReference>
<dbReference type="SignaLink" id="P91679"/>
<dbReference type="BioGRID-ORCS" id="31340">
    <property type="hits" value="0 hits in 3 CRISPR screens"/>
</dbReference>
<dbReference type="GenomeRNAi" id="31340"/>
<dbReference type="PRO" id="PR:P91679"/>
<dbReference type="Proteomes" id="UP000000803">
    <property type="component" value="Chromosome X"/>
</dbReference>
<dbReference type="Bgee" id="FBgn0265575">
    <property type="expression patterns" value="Expressed in oocyte and 109 other cell types or tissues"/>
</dbReference>
<dbReference type="ExpressionAtlas" id="P91679">
    <property type="expression patterns" value="baseline and differential"/>
</dbReference>
<dbReference type="GO" id="GO:0016324">
    <property type="term" value="C:apical plasma membrane"/>
    <property type="evidence" value="ECO:0000318"/>
    <property type="project" value="GO_Central"/>
</dbReference>
<dbReference type="GO" id="GO:0030670">
    <property type="term" value="C:phagocytic vesicle membrane"/>
    <property type="evidence" value="ECO:0000316"/>
    <property type="project" value="FlyBase"/>
</dbReference>
<dbReference type="GO" id="GO:0005886">
    <property type="term" value="C:plasma membrane"/>
    <property type="evidence" value="ECO:0000314"/>
    <property type="project" value="FlyBase"/>
</dbReference>
<dbReference type="GO" id="GO:0071916">
    <property type="term" value="F:dipeptide transmembrane transporter activity"/>
    <property type="evidence" value="ECO:0000318"/>
    <property type="project" value="GO_Central"/>
</dbReference>
<dbReference type="GO" id="GO:0035673">
    <property type="term" value="F:oligopeptide transmembrane transporter activity"/>
    <property type="evidence" value="ECO:0000316"/>
    <property type="project" value="FlyBase"/>
</dbReference>
<dbReference type="GO" id="GO:0005427">
    <property type="term" value="F:proton-dependent oligopeptide secondary active transmembrane transporter activity"/>
    <property type="evidence" value="ECO:0000314"/>
    <property type="project" value="FlyBase"/>
</dbReference>
<dbReference type="GO" id="GO:0140206">
    <property type="term" value="P:dipeptide import across plasma membrane"/>
    <property type="evidence" value="ECO:0000318"/>
    <property type="project" value="GO_Central"/>
</dbReference>
<dbReference type="GO" id="GO:0035442">
    <property type="term" value="P:dipeptide transmembrane transport"/>
    <property type="evidence" value="ECO:0000316"/>
    <property type="project" value="FlyBase"/>
</dbReference>
<dbReference type="GO" id="GO:0006857">
    <property type="term" value="P:oligopeptide transport"/>
    <property type="evidence" value="ECO:0000314"/>
    <property type="project" value="FlyBase"/>
</dbReference>
<dbReference type="GO" id="GO:0015031">
    <property type="term" value="P:protein transport"/>
    <property type="evidence" value="ECO:0007669"/>
    <property type="project" value="UniProtKB-KW"/>
</dbReference>
<dbReference type="CDD" id="cd17347">
    <property type="entry name" value="MFS_SLC15A1_2_like"/>
    <property type="match status" value="1"/>
</dbReference>
<dbReference type="FunFam" id="1.20.1250.20:FF:000049">
    <property type="entry name" value="Solute carrier family 15 member 2"/>
    <property type="match status" value="1"/>
</dbReference>
<dbReference type="FunFam" id="1.20.1250.20:FF:001070">
    <property type="entry name" value="Yin, isoform D"/>
    <property type="match status" value="1"/>
</dbReference>
<dbReference type="Gene3D" id="1.20.1250.20">
    <property type="entry name" value="MFS general substrate transporter like domains"/>
    <property type="match status" value="2"/>
</dbReference>
<dbReference type="InterPro" id="IPR036259">
    <property type="entry name" value="MFS_trans_sf"/>
</dbReference>
<dbReference type="InterPro" id="IPR004768">
    <property type="entry name" value="Oligopep_transport"/>
</dbReference>
<dbReference type="InterPro" id="IPR000109">
    <property type="entry name" value="POT_fam"/>
</dbReference>
<dbReference type="InterPro" id="IPR018456">
    <property type="entry name" value="PTR2_symporter_CS"/>
</dbReference>
<dbReference type="NCBIfam" id="TIGR00926">
    <property type="entry name" value="2A1704"/>
    <property type="match status" value="1"/>
</dbReference>
<dbReference type="PANTHER" id="PTHR11654">
    <property type="entry name" value="OLIGOPEPTIDE TRANSPORTER-RELATED"/>
    <property type="match status" value="1"/>
</dbReference>
<dbReference type="Pfam" id="PF00854">
    <property type="entry name" value="PTR2"/>
    <property type="match status" value="2"/>
</dbReference>
<dbReference type="SUPFAM" id="SSF103473">
    <property type="entry name" value="MFS general substrate transporter"/>
    <property type="match status" value="1"/>
</dbReference>
<dbReference type="PROSITE" id="PS01022">
    <property type="entry name" value="PTR2_1"/>
    <property type="match status" value="1"/>
</dbReference>
<dbReference type="PROSITE" id="PS01023">
    <property type="entry name" value="PTR2_2"/>
    <property type="match status" value="1"/>
</dbReference>
<evidence type="ECO:0000255" key="1"/>
<evidence type="ECO:0000256" key="2">
    <source>
        <dbReference type="SAM" id="MobiDB-lite"/>
    </source>
</evidence>
<evidence type="ECO:0000269" key="3">
    <source>
    </source>
</evidence>
<evidence type="ECO:0000269" key="4">
    <source>
    </source>
</evidence>
<evidence type="ECO:0000303" key="5">
    <source>
    </source>
</evidence>
<evidence type="ECO:0000303" key="6">
    <source ref="6"/>
</evidence>
<evidence type="ECO:0000305" key="7"/>
<feature type="chain" id="PRO_0000064312" description="Peptide transporter family 1">
    <location>
        <begin position="1"/>
        <end position="743"/>
    </location>
</feature>
<feature type="transmembrane region" description="Helical" evidence="1">
    <location>
        <begin position="74"/>
        <end position="94"/>
    </location>
</feature>
<feature type="transmembrane region" description="Helical" evidence="1">
    <location>
        <begin position="104"/>
        <end position="124"/>
    </location>
</feature>
<feature type="transmembrane region" description="Helical" evidence="1">
    <location>
        <begin position="132"/>
        <end position="152"/>
    </location>
</feature>
<feature type="transmembrane region" description="Helical" evidence="1">
    <location>
        <begin position="173"/>
        <end position="193"/>
    </location>
</feature>
<feature type="transmembrane region" description="Helical" evidence="1">
    <location>
        <begin position="207"/>
        <end position="227"/>
    </location>
</feature>
<feature type="transmembrane region" description="Helical" evidence="1">
    <location>
        <begin position="334"/>
        <end position="354"/>
    </location>
</feature>
<feature type="transmembrane region" description="Helical" evidence="1">
    <location>
        <begin position="364"/>
        <end position="384"/>
    </location>
</feature>
<feature type="transmembrane region" description="Helical" evidence="1">
    <location>
        <begin position="597"/>
        <end position="619"/>
    </location>
</feature>
<feature type="transmembrane region" description="Helical" evidence="1">
    <location>
        <begin position="629"/>
        <end position="649"/>
    </location>
</feature>
<feature type="transmembrane region" description="Helical" evidence="1">
    <location>
        <begin position="659"/>
        <end position="679"/>
    </location>
</feature>
<feature type="region of interest" description="Disordered" evidence="2">
    <location>
        <begin position="1"/>
        <end position="28"/>
    </location>
</feature>
<feature type="compositionally biased region" description="Low complexity" evidence="2">
    <location>
        <begin position="7"/>
        <end position="16"/>
    </location>
</feature>
<feature type="splice variant" id="VSP_015662" description="In isoform B." evidence="5 6">
    <original>MASEITNGKNGQNGKNGQKEESDSQIA</original>
    <variation>MAFVSNAIVGPENCKSVTVSL</variation>
    <location>
        <begin position="1"/>
        <end position="27"/>
    </location>
</feature>
<feature type="splice variant" id="VSP_015663" description="In isoform C." evidence="6">
    <original>MASEITNGKNGQNGKNGQKEESDSQIA</original>
    <variation>MAFVSNAIVGPENCKSVT</variation>
    <location>
        <begin position="1"/>
        <end position="27"/>
    </location>
</feature>
<feature type="sequence conflict" description="In Ref. 1; AAC47465." evidence="7" ref="1">
    <original>T</original>
    <variation>N</variation>
    <location>
        <position position="145"/>
    </location>
</feature>
<feature type="sequence conflict" description="In Ref. 1; AAC47465." evidence="7" ref="1">
    <original>K</original>
    <variation>N</variation>
    <location>
        <position position="149"/>
    </location>
</feature>
<feature type="sequence conflict" description="In Ref. 1; AAC47465." evidence="7" ref="1">
    <original>A</original>
    <variation>P</variation>
    <location>
        <position position="154"/>
    </location>
</feature>
<feature type="sequence conflict" description="In Ref. 1; AAC47465." evidence="7" ref="1">
    <original>D</original>
    <variation>E</variation>
    <location>
        <position position="158"/>
    </location>
</feature>
<feature type="sequence conflict" description="In Ref. 1; AAC47465." evidence="7" ref="1">
    <original>L</original>
    <variation>F</variation>
    <location>
        <position position="371"/>
    </location>
</feature>
<feature type="sequence conflict" description="In Ref. 5; CAA20015." evidence="7" ref="5">
    <original>I</original>
    <variation>T</variation>
    <location>
        <position position="462"/>
    </location>
</feature>
<feature type="sequence conflict" description="In Ref. 1; AAC47465, 2; AAD04200/AAD04201 and 5; CAA20015." evidence="7" ref="1 2 5">
    <original>L</original>
    <variation>P</variation>
    <location>
        <position position="588"/>
    </location>
</feature>
<gene>
    <name type="primary">yin</name>
    <name type="synonym">opt1</name>
    <name type="ORF">CG44402</name>
</gene>
<accession>P91679</accession>
<accession>A9UNA2</accession>
<accession>A9UNE6</accession>
<accession>O77281</accession>
<accession>O77282</accession>
<accession>Q7K7E7</accession>
<accession>Q7KVX8</accession>
<accession>Q8IRT2</accession>
<accession>Q95TX0</accession>
<accession>Q9TY25</accession>
<accession>Q9TY26</accession>
<accession>Q9W4P7</accession>
<accession>Q9W4P8</accession>
<protein>
    <recommendedName>
        <fullName>Peptide transporter family 1</fullName>
    </recommendedName>
    <alternativeName>
        <fullName>Oligopeptide transporter 1</fullName>
    </alternativeName>
    <alternativeName>
        <fullName>Protein YIN</fullName>
    </alternativeName>
</protein>
<keyword id="KW-0025">Alternative splicing</keyword>
<keyword id="KW-0472">Membrane</keyword>
<keyword id="KW-0571">Peptide transport</keyword>
<keyword id="KW-0653">Protein transport</keyword>
<keyword id="KW-1185">Reference proteome</keyword>
<keyword id="KW-0812">Transmembrane</keyword>
<keyword id="KW-1133">Transmembrane helix</keyword>
<keyword id="KW-0813">Transport</keyword>
<name>PEPT1_DROME</name>
<reference key="1">
    <citation type="journal article" date="1997" name="Cell">
        <title>Genes expressed in neurons of adult male Drosophila.</title>
        <authorList>
            <person name="Amrein H."/>
            <person name="Axel R."/>
        </authorList>
    </citation>
    <scope>NUCLEOTIDE SEQUENCE [MRNA] (ISOFORM B)</scope>
    <scope>TISSUE SPECIFICITY</scope>
</reference>
<reference key="2">
    <citation type="journal article" date="1998" name="Am. J. Physiol.">
        <title>The opt1 gene of Drosophila melanogaster encodes a proton-dependent dipeptide transporter.</title>
        <authorList>
            <person name="Roman G."/>
            <person name="Meller V."/>
            <person name="Wu K.H."/>
            <person name="Davis R.L."/>
        </authorList>
    </citation>
    <scope>NUCLEOTIDE SEQUENCE [GENOMIC DNA]</scope>
    <scope>ALTERNATIVE SPLICING (ISOFORMS A AND B)</scope>
    <scope>FUNCTION</scope>
    <scope>BIOPHYSICOCHEMICAL PROPERTIES</scope>
    <scope>SUBCELLULAR LOCATION</scope>
    <scope>TISSUE SPECIFICITY</scope>
    <scope>DEVELOPMENTAL STAGE</scope>
    <source>
        <strain>Canton-S</strain>
        <tissue>Head</tissue>
    </source>
</reference>
<reference key="3">
    <citation type="journal article" date="2000" name="Science">
        <title>The genome sequence of Drosophila melanogaster.</title>
        <authorList>
            <person name="Adams M.D."/>
            <person name="Celniker S.E."/>
            <person name="Holt R.A."/>
            <person name="Evans C.A."/>
            <person name="Gocayne J.D."/>
            <person name="Amanatides P.G."/>
            <person name="Scherer S.E."/>
            <person name="Li P.W."/>
            <person name="Hoskins R.A."/>
            <person name="Galle R.F."/>
            <person name="George R.A."/>
            <person name="Lewis S.E."/>
            <person name="Richards S."/>
            <person name="Ashburner M."/>
            <person name="Henderson S.N."/>
            <person name="Sutton G.G."/>
            <person name="Wortman J.R."/>
            <person name="Yandell M.D."/>
            <person name="Zhang Q."/>
            <person name="Chen L.X."/>
            <person name="Brandon R.C."/>
            <person name="Rogers Y.-H.C."/>
            <person name="Blazej R.G."/>
            <person name="Champe M."/>
            <person name="Pfeiffer B.D."/>
            <person name="Wan K.H."/>
            <person name="Doyle C."/>
            <person name="Baxter E.G."/>
            <person name="Helt G."/>
            <person name="Nelson C.R."/>
            <person name="Miklos G.L.G."/>
            <person name="Abril J.F."/>
            <person name="Agbayani A."/>
            <person name="An H.-J."/>
            <person name="Andrews-Pfannkoch C."/>
            <person name="Baldwin D."/>
            <person name="Ballew R.M."/>
            <person name="Basu A."/>
            <person name="Baxendale J."/>
            <person name="Bayraktaroglu L."/>
            <person name="Beasley E.M."/>
            <person name="Beeson K.Y."/>
            <person name="Benos P.V."/>
            <person name="Berman B.P."/>
            <person name="Bhandari D."/>
            <person name="Bolshakov S."/>
            <person name="Borkova D."/>
            <person name="Botchan M.R."/>
            <person name="Bouck J."/>
            <person name="Brokstein P."/>
            <person name="Brottier P."/>
            <person name="Burtis K.C."/>
            <person name="Busam D.A."/>
            <person name="Butler H."/>
            <person name="Cadieu E."/>
            <person name="Center A."/>
            <person name="Chandra I."/>
            <person name="Cherry J.M."/>
            <person name="Cawley S."/>
            <person name="Dahlke C."/>
            <person name="Davenport L.B."/>
            <person name="Davies P."/>
            <person name="de Pablos B."/>
            <person name="Delcher A."/>
            <person name="Deng Z."/>
            <person name="Mays A.D."/>
            <person name="Dew I."/>
            <person name="Dietz S.M."/>
            <person name="Dodson K."/>
            <person name="Doup L.E."/>
            <person name="Downes M."/>
            <person name="Dugan-Rocha S."/>
            <person name="Dunkov B.C."/>
            <person name="Dunn P."/>
            <person name="Durbin K.J."/>
            <person name="Evangelista C.C."/>
            <person name="Ferraz C."/>
            <person name="Ferriera S."/>
            <person name="Fleischmann W."/>
            <person name="Fosler C."/>
            <person name="Gabrielian A.E."/>
            <person name="Garg N.S."/>
            <person name="Gelbart W.M."/>
            <person name="Glasser K."/>
            <person name="Glodek A."/>
            <person name="Gong F."/>
            <person name="Gorrell J.H."/>
            <person name="Gu Z."/>
            <person name="Guan P."/>
            <person name="Harris M."/>
            <person name="Harris N.L."/>
            <person name="Harvey D.A."/>
            <person name="Heiman T.J."/>
            <person name="Hernandez J.R."/>
            <person name="Houck J."/>
            <person name="Hostin D."/>
            <person name="Houston K.A."/>
            <person name="Howland T.J."/>
            <person name="Wei M.-H."/>
            <person name="Ibegwam C."/>
            <person name="Jalali M."/>
            <person name="Kalush F."/>
            <person name="Karpen G.H."/>
            <person name="Ke Z."/>
            <person name="Kennison J.A."/>
            <person name="Ketchum K.A."/>
            <person name="Kimmel B.E."/>
            <person name="Kodira C.D."/>
            <person name="Kraft C.L."/>
            <person name="Kravitz S."/>
            <person name="Kulp D."/>
            <person name="Lai Z."/>
            <person name="Lasko P."/>
            <person name="Lei Y."/>
            <person name="Levitsky A.A."/>
            <person name="Li J.H."/>
            <person name="Li Z."/>
            <person name="Liang Y."/>
            <person name="Lin X."/>
            <person name="Liu X."/>
            <person name="Mattei B."/>
            <person name="McIntosh T.C."/>
            <person name="McLeod M.P."/>
            <person name="McPherson D."/>
            <person name="Merkulov G."/>
            <person name="Milshina N.V."/>
            <person name="Mobarry C."/>
            <person name="Morris J."/>
            <person name="Moshrefi A."/>
            <person name="Mount S.M."/>
            <person name="Moy M."/>
            <person name="Murphy B."/>
            <person name="Murphy L."/>
            <person name="Muzny D.M."/>
            <person name="Nelson D.L."/>
            <person name="Nelson D.R."/>
            <person name="Nelson K.A."/>
            <person name="Nixon K."/>
            <person name="Nusskern D.R."/>
            <person name="Pacleb J.M."/>
            <person name="Palazzolo M."/>
            <person name="Pittman G.S."/>
            <person name="Pan S."/>
            <person name="Pollard J."/>
            <person name="Puri V."/>
            <person name="Reese M.G."/>
            <person name="Reinert K."/>
            <person name="Remington K."/>
            <person name="Saunders R.D.C."/>
            <person name="Scheeler F."/>
            <person name="Shen H."/>
            <person name="Shue B.C."/>
            <person name="Siden-Kiamos I."/>
            <person name="Simpson M."/>
            <person name="Skupski M.P."/>
            <person name="Smith T.J."/>
            <person name="Spier E."/>
            <person name="Spradling A.C."/>
            <person name="Stapleton M."/>
            <person name="Strong R."/>
            <person name="Sun E."/>
            <person name="Svirskas R."/>
            <person name="Tector C."/>
            <person name="Turner R."/>
            <person name="Venter E."/>
            <person name="Wang A.H."/>
            <person name="Wang X."/>
            <person name="Wang Z.-Y."/>
            <person name="Wassarman D.A."/>
            <person name="Weinstock G.M."/>
            <person name="Weissenbach J."/>
            <person name="Williams S.M."/>
            <person name="Woodage T."/>
            <person name="Worley K.C."/>
            <person name="Wu D."/>
            <person name="Yang S."/>
            <person name="Yao Q.A."/>
            <person name="Ye J."/>
            <person name="Yeh R.-F."/>
            <person name="Zaveri J.S."/>
            <person name="Zhan M."/>
            <person name="Zhang G."/>
            <person name="Zhao Q."/>
            <person name="Zheng L."/>
            <person name="Zheng X.H."/>
            <person name="Zhong F.N."/>
            <person name="Zhong W."/>
            <person name="Zhou X."/>
            <person name="Zhu S.C."/>
            <person name="Zhu X."/>
            <person name="Smith H.O."/>
            <person name="Gibbs R.A."/>
            <person name="Myers E.W."/>
            <person name="Rubin G.M."/>
            <person name="Venter J.C."/>
        </authorList>
    </citation>
    <scope>NUCLEOTIDE SEQUENCE [LARGE SCALE GENOMIC DNA]</scope>
    <source>
        <strain>Berkeley</strain>
    </source>
</reference>
<reference key="4">
    <citation type="journal article" date="2002" name="Genome Biol.">
        <title>Annotation of the Drosophila melanogaster euchromatic genome: a systematic review.</title>
        <authorList>
            <person name="Misra S."/>
            <person name="Crosby M.A."/>
            <person name="Mungall C.J."/>
            <person name="Matthews B.B."/>
            <person name="Campbell K.S."/>
            <person name="Hradecky P."/>
            <person name="Huang Y."/>
            <person name="Kaminker J.S."/>
            <person name="Millburn G.H."/>
            <person name="Prochnik S.E."/>
            <person name="Smith C.D."/>
            <person name="Tupy J.L."/>
            <person name="Whitfield E.J."/>
            <person name="Bayraktaroglu L."/>
            <person name="Berman B.P."/>
            <person name="Bettencourt B.R."/>
            <person name="Celniker S.E."/>
            <person name="de Grey A.D.N.J."/>
            <person name="Drysdale R.A."/>
            <person name="Harris N.L."/>
            <person name="Richter J."/>
            <person name="Russo S."/>
            <person name="Schroeder A.J."/>
            <person name="Shu S.Q."/>
            <person name="Stapleton M."/>
            <person name="Yamada C."/>
            <person name="Ashburner M."/>
            <person name="Gelbart W.M."/>
            <person name="Rubin G.M."/>
            <person name="Lewis S.E."/>
        </authorList>
    </citation>
    <scope>GENOME REANNOTATION</scope>
    <scope>ALTERNATIVE SPLICING</scope>
    <source>
        <strain>Berkeley</strain>
    </source>
</reference>
<reference key="5">
    <citation type="journal article" date="2000" name="Science">
        <title>From sequence to chromosome: the tip of the X chromosome of D. melanogaster.</title>
        <authorList>
            <person name="Benos P.V."/>
            <person name="Gatt M.K."/>
            <person name="Ashburner M."/>
            <person name="Murphy L."/>
            <person name="Harris D."/>
            <person name="Barrell B.G."/>
            <person name="Ferraz C."/>
            <person name="Vidal S."/>
            <person name="Brun C."/>
            <person name="Demailles J."/>
            <person name="Cadieu E."/>
            <person name="Dreano S."/>
            <person name="Gloux S."/>
            <person name="Lelaure V."/>
            <person name="Mottier S."/>
            <person name="Galibert F."/>
            <person name="Borkova D."/>
            <person name="Minana B."/>
            <person name="Kafatos F.C."/>
            <person name="Louis C."/>
            <person name="Siden-Kiamos I."/>
            <person name="Bolshakov S."/>
            <person name="Papagiannakis G."/>
            <person name="Spanos L."/>
            <person name="Cox S."/>
            <person name="Madueno E."/>
            <person name="de Pablos B."/>
            <person name="Modolell J."/>
            <person name="Peter A."/>
            <person name="Schoettler P."/>
            <person name="Werner M."/>
            <person name="Mourkioti F."/>
            <person name="Beinert N."/>
            <person name="Dowe G."/>
            <person name="Schaefer U."/>
            <person name="Jaeckle H."/>
            <person name="Bucheton A."/>
            <person name="Callister D.M."/>
            <person name="Campbell L.A."/>
            <person name="Darlamitsou A."/>
            <person name="Henderson N.S."/>
            <person name="McMillan P.J."/>
            <person name="Salles C."/>
            <person name="Tait E.A."/>
            <person name="Valenti P."/>
            <person name="Saunders R.D.C."/>
            <person name="Glover D.M."/>
        </authorList>
    </citation>
    <scope>NUCLEOTIDE SEQUENCE [LARGE SCALE GENOMIC DNA]</scope>
    <scope>ALTERNATIVE SPLICING</scope>
    <source>
        <strain>Oregon-R</strain>
    </source>
</reference>
<reference key="6">
    <citation type="submission" date="2007-12" db="EMBL/GenBank/DDBJ databases">
        <authorList>
            <person name="Stapleton M."/>
            <person name="Carlson J.W."/>
            <person name="Frise E."/>
            <person name="Kapadia B."/>
            <person name="Park S."/>
            <person name="Wan K.H."/>
            <person name="Yu C."/>
            <person name="Celniker S.E."/>
        </authorList>
    </citation>
    <scope>NUCLEOTIDE SEQUENCE [LARGE SCALE MRNA] (ISOFORMS B AND C)</scope>
    <source>
        <strain>Berkeley</strain>
        <tissue>Embryo</tissue>
        <tissue>Head</tissue>
    </source>
</reference>
<reference key="7">
    <citation type="journal article" date="2002" name="Genome Biol.">
        <title>A Drosophila full-length cDNA resource.</title>
        <authorList>
            <person name="Stapleton M."/>
            <person name="Carlson J.W."/>
            <person name="Brokstein P."/>
            <person name="Yu C."/>
            <person name="Champe M."/>
            <person name="George R.A."/>
            <person name="Guarin H."/>
            <person name="Kronmiller B."/>
            <person name="Pacleb J.M."/>
            <person name="Park S."/>
            <person name="Wan K.H."/>
            <person name="Rubin G.M."/>
            <person name="Celniker S.E."/>
        </authorList>
    </citation>
    <scope>NUCLEOTIDE SEQUENCE [LARGE SCALE MRNA] OF 359-743</scope>
    <source>
        <strain>Berkeley</strain>
        <tissue>Head</tissue>
    </source>
</reference>
<comment type="function">
    <text evidence="4">Important role in absorption of dietary peptides. High-affinity transporter of alanylalanine. Dipeptide transport activity is proton dependent.</text>
</comment>
<comment type="biophysicochemical properties">
    <kinetics>
        <KM evidence="4">48.8 uM for alanylalanine</KM>
    </kinetics>
    <phDependence>
        <text evidence="4">Optimum pH is 6.</text>
    </phDependence>
</comment>
<comment type="subcellular location">
    <subcellularLocation>
        <location evidence="4">Membrane</location>
        <topology evidence="4">Multi-pass membrane protein</topology>
    </subcellularLocation>
</comment>
<comment type="alternative products">
    <event type="alternative splicing"/>
    <isoform>
        <id>P91679-1</id>
        <name>A</name>
        <name>Long</name>
        <sequence type="displayed"/>
    </isoform>
    <isoform>
        <id>P91679-2</id>
        <name>B</name>
        <name>Short</name>
        <sequence type="described" ref="VSP_015662"/>
    </isoform>
    <isoform>
        <id>P91679-3</id>
        <name>C</name>
        <sequence type="described" ref="VSP_015663"/>
    </isoform>
</comment>
<comment type="tissue specificity">
    <text evidence="3 4">Expressed in thorax and abdomen of females: apical epithelial membranes of midgut, rectum, and reproductive tract. Also expressed in neuropil of the central nervous system, with elevated expression within the alpha- and beta-lobes of the mushroom bodies.</text>
</comment>
<comment type="developmental stage">
    <text evidence="4">Expressed both maternally and zygotically.</text>
</comment>
<comment type="similarity">
    <text evidence="7">Belongs to the major facilitator superfamily. Proton-dependent oligopeptide transporter (POT/PTR) (TC 2.A.17) family.</text>
</comment>
<comment type="sequence caution" evidence="7">
    <conflict type="erroneous initiation">
        <sequence resource="EMBL-CDS" id="AAL13696"/>
    </conflict>
</comment>
<comment type="sequence caution" evidence="7">
    <conflict type="erroneous initiation">
        <sequence resource="EMBL-CDS" id="ABY21723"/>
    </conflict>
</comment>
<sequence length="743" mass="82245">MASEITNGKNGQNGKNGQKEESDSQIAPPIPYPKSVAFIISNEFCERFNYYGMRTILVLYLTNKLGYNEETATVLFHTFTMLVYIFPLIGALIADGWLGKYKTILYLSLVYSLGAMVVSFGAVPLSGMPTKAVTVVGLLLIAIGTGGIKPCVSAFGGDQFSLPAQSFQLAKFFSLFYFAINAGSLISTTFTPILRADVHCFGDQDCFSLAFGVPAILMIFSVIIFMAGKRLYRCQPPAGNMIFGVSRCIADAFKGWQKRRHSEPMESFLDYAKPTVGSRMVQETKCLGRILRLFLPFPVFWALFDQQGSRWTFQATRMDGNVLGFQIKPDQMQVVNPLLILGFLPLFDYIIYPALARCGIRRPLQKLTLGLLLAALGFFLSAGLEMKMEQAAYRATPIEPDMTHLRIYNGMPCRYEISSAVVQTPRVIEPLNVWEDLSLQMTESKEYTFNAQPVSGECPSIIDKLRLQPGKSVSYFLAQDKLVEFADGLQMAATDTGRTSVRALLNTPDGEGPVLLSTESATSQEPPLTLDKGNVPQLHRITPGFARVDINGKKVASFEAKEGRLYSILVTGSARDGYQHNVIEVVALSTVSILWQLPQIVVMTAAEVMFSVTGLEFSYSQSPPSMKSVLQACWLLSVAIGNMLVVVIAEFKFTSSQSGEFTLFASLMLVDMMIFLWLARSYQYKDQREDFEDDDDATIDSVMQSKPKATTVDTTARKTNGIEAEPGYGAYRNHAYDNDFSEA</sequence>
<proteinExistence type="evidence at protein level"/>
<organism>
    <name type="scientific">Drosophila melanogaster</name>
    <name type="common">Fruit fly</name>
    <dbReference type="NCBI Taxonomy" id="7227"/>
    <lineage>
        <taxon>Eukaryota</taxon>
        <taxon>Metazoa</taxon>
        <taxon>Ecdysozoa</taxon>
        <taxon>Arthropoda</taxon>
        <taxon>Hexapoda</taxon>
        <taxon>Insecta</taxon>
        <taxon>Pterygota</taxon>
        <taxon>Neoptera</taxon>
        <taxon>Endopterygota</taxon>
        <taxon>Diptera</taxon>
        <taxon>Brachycera</taxon>
        <taxon>Muscomorpha</taxon>
        <taxon>Ephydroidea</taxon>
        <taxon>Drosophilidae</taxon>
        <taxon>Drosophila</taxon>
        <taxon>Sophophora</taxon>
    </lineage>
</organism>